<reference key="1">
    <citation type="journal article" date="2006" name="Proc. Natl. Acad. Sci. U.S.A.">
        <title>Comparative genomics of the lactic acid bacteria.</title>
        <authorList>
            <person name="Makarova K.S."/>
            <person name="Slesarev A."/>
            <person name="Wolf Y.I."/>
            <person name="Sorokin A."/>
            <person name="Mirkin B."/>
            <person name="Koonin E.V."/>
            <person name="Pavlov A."/>
            <person name="Pavlova N."/>
            <person name="Karamychev V."/>
            <person name="Polouchine N."/>
            <person name="Shakhova V."/>
            <person name="Grigoriev I."/>
            <person name="Lou Y."/>
            <person name="Rohksar D."/>
            <person name="Lucas S."/>
            <person name="Huang K."/>
            <person name="Goodstein D.M."/>
            <person name="Hawkins T."/>
            <person name="Plengvidhya V."/>
            <person name="Welker D."/>
            <person name="Hughes J."/>
            <person name="Goh Y."/>
            <person name="Benson A."/>
            <person name="Baldwin K."/>
            <person name="Lee J.-H."/>
            <person name="Diaz-Muniz I."/>
            <person name="Dosti B."/>
            <person name="Smeianov V."/>
            <person name="Wechter W."/>
            <person name="Barabote R."/>
            <person name="Lorca G."/>
            <person name="Altermann E."/>
            <person name="Barrangou R."/>
            <person name="Ganesan B."/>
            <person name="Xie Y."/>
            <person name="Rawsthorne H."/>
            <person name="Tamir D."/>
            <person name="Parker C."/>
            <person name="Breidt F."/>
            <person name="Broadbent J.R."/>
            <person name="Hutkins R."/>
            <person name="O'Sullivan D."/>
            <person name="Steele J."/>
            <person name="Unlu G."/>
            <person name="Saier M.H. Jr."/>
            <person name="Klaenhammer T."/>
            <person name="Richardson P."/>
            <person name="Kozyavkin S."/>
            <person name="Weimer B.C."/>
            <person name="Mills D.A."/>
        </authorList>
    </citation>
    <scope>NUCLEOTIDE SEQUENCE [LARGE SCALE GENOMIC DNA]</scope>
    <source>
        <strain>ATCC BAA-365 / Lb-18</strain>
    </source>
</reference>
<evidence type="ECO:0000255" key="1">
    <source>
        <dbReference type="HAMAP-Rule" id="MF_01325"/>
    </source>
</evidence>
<evidence type="ECO:0000256" key="2">
    <source>
        <dbReference type="SAM" id="MobiDB-lite"/>
    </source>
</evidence>
<evidence type="ECO:0000305" key="3"/>
<accession>Q04C15</accession>
<dbReference type="EMBL" id="CP000412">
    <property type="protein sequence ID" value="ABJ58007.1"/>
    <property type="molecule type" value="Genomic_DNA"/>
</dbReference>
<dbReference type="RefSeq" id="WP_002878214.1">
    <property type="nucleotide sequence ID" value="NC_008529.1"/>
</dbReference>
<dbReference type="SMR" id="Q04C15"/>
<dbReference type="GeneID" id="69668426"/>
<dbReference type="KEGG" id="lbu:LBUL_0350"/>
<dbReference type="HOGENOM" id="CLU_044142_4_1_9"/>
<dbReference type="BioCyc" id="LDEL321956:LBUL_RS01635-MONOMER"/>
<dbReference type="GO" id="GO:0022625">
    <property type="term" value="C:cytosolic large ribosomal subunit"/>
    <property type="evidence" value="ECO:0007669"/>
    <property type="project" value="TreeGrafter"/>
</dbReference>
<dbReference type="GO" id="GO:0019843">
    <property type="term" value="F:rRNA binding"/>
    <property type="evidence" value="ECO:0007669"/>
    <property type="project" value="UniProtKB-UniRule"/>
</dbReference>
<dbReference type="GO" id="GO:0003735">
    <property type="term" value="F:structural constituent of ribosome"/>
    <property type="evidence" value="ECO:0007669"/>
    <property type="project" value="InterPro"/>
</dbReference>
<dbReference type="GO" id="GO:0006412">
    <property type="term" value="P:translation"/>
    <property type="evidence" value="ECO:0007669"/>
    <property type="project" value="UniProtKB-UniRule"/>
</dbReference>
<dbReference type="FunFam" id="2.40.30.10:FF:000004">
    <property type="entry name" value="50S ribosomal protein L3"/>
    <property type="match status" value="1"/>
</dbReference>
<dbReference type="FunFam" id="3.30.160.810:FF:000002">
    <property type="entry name" value="50S ribosomal protein L3"/>
    <property type="match status" value="1"/>
</dbReference>
<dbReference type="Gene3D" id="3.30.160.810">
    <property type="match status" value="1"/>
</dbReference>
<dbReference type="Gene3D" id="2.40.30.10">
    <property type="entry name" value="Translation factors"/>
    <property type="match status" value="1"/>
</dbReference>
<dbReference type="HAMAP" id="MF_01325_B">
    <property type="entry name" value="Ribosomal_uL3_B"/>
    <property type="match status" value="1"/>
</dbReference>
<dbReference type="InterPro" id="IPR000597">
    <property type="entry name" value="Ribosomal_uL3"/>
</dbReference>
<dbReference type="InterPro" id="IPR019927">
    <property type="entry name" value="Ribosomal_uL3_bac/org-type"/>
</dbReference>
<dbReference type="InterPro" id="IPR019926">
    <property type="entry name" value="Ribosomal_uL3_CS"/>
</dbReference>
<dbReference type="InterPro" id="IPR009000">
    <property type="entry name" value="Transl_B-barrel_sf"/>
</dbReference>
<dbReference type="NCBIfam" id="TIGR03625">
    <property type="entry name" value="L3_bact"/>
    <property type="match status" value="1"/>
</dbReference>
<dbReference type="PANTHER" id="PTHR11229">
    <property type="entry name" value="50S RIBOSOMAL PROTEIN L3"/>
    <property type="match status" value="1"/>
</dbReference>
<dbReference type="PANTHER" id="PTHR11229:SF16">
    <property type="entry name" value="LARGE RIBOSOMAL SUBUNIT PROTEIN UL3C"/>
    <property type="match status" value="1"/>
</dbReference>
<dbReference type="Pfam" id="PF00297">
    <property type="entry name" value="Ribosomal_L3"/>
    <property type="match status" value="1"/>
</dbReference>
<dbReference type="SUPFAM" id="SSF50447">
    <property type="entry name" value="Translation proteins"/>
    <property type="match status" value="1"/>
</dbReference>
<dbReference type="PROSITE" id="PS00474">
    <property type="entry name" value="RIBOSOMAL_L3"/>
    <property type="match status" value="1"/>
</dbReference>
<feature type="chain" id="PRO_1000052065" description="Large ribosomal subunit protein uL3">
    <location>
        <begin position="1"/>
        <end position="209"/>
    </location>
</feature>
<feature type="region of interest" description="Disordered" evidence="2">
    <location>
        <begin position="113"/>
        <end position="155"/>
    </location>
</feature>
<name>RL3_LACDB</name>
<protein>
    <recommendedName>
        <fullName evidence="1">Large ribosomal subunit protein uL3</fullName>
    </recommendedName>
    <alternativeName>
        <fullName evidence="3">50S ribosomal protein L3</fullName>
    </alternativeName>
</protein>
<keyword id="KW-0687">Ribonucleoprotein</keyword>
<keyword id="KW-0689">Ribosomal protein</keyword>
<keyword id="KW-0694">RNA-binding</keyword>
<keyword id="KW-0699">rRNA-binding</keyword>
<gene>
    <name evidence="1" type="primary">rplC</name>
    <name type="ordered locus">LBUL_0350</name>
</gene>
<proteinExistence type="inferred from homology"/>
<sequence length="209" mass="22765">MTKGILGRKVGMTQIFTKDGVLVPVTVIEATPNVVMQVKTVENDGYEAVQLGYQDKREVLSNKPEKGHADKAKTSPKRFIRELRGVELSDYEVGSEVTVETFKEGDVVNVTGTSRGHGYQGNIKRHHQSRGPETHGSRYHRIPGSMGSIINRVPKGKKLPGHMGVKTVTIENLVVEKVVADKNVLMIKGNVPGAKNSLIVVKSSAKASK</sequence>
<organism>
    <name type="scientific">Lactobacillus delbrueckii subsp. bulgaricus (strain ATCC BAA-365 / Lb-18)</name>
    <dbReference type="NCBI Taxonomy" id="321956"/>
    <lineage>
        <taxon>Bacteria</taxon>
        <taxon>Bacillati</taxon>
        <taxon>Bacillota</taxon>
        <taxon>Bacilli</taxon>
        <taxon>Lactobacillales</taxon>
        <taxon>Lactobacillaceae</taxon>
        <taxon>Lactobacillus</taxon>
    </lineage>
</organism>
<comment type="function">
    <text evidence="1">One of the primary rRNA binding proteins, it binds directly near the 3'-end of the 23S rRNA, where it nucleates assembly of the 50S subunit.</text>
</comment>
<comment type="subunit">
    <text evidence="1">Part of the 50S ribosomal subunit. Forms a cluster with proteins L14 and L19.</text>
</comment>
<comment type="similarity">
    <text evidence="1">Belongs to the universal ribosomal protein uL3 family.</text>
</comment>